<organism>
    <name type="scientific">Arabidopsis thaliana</name>
    <name type="common">Mouse-ear cress</name>
    <dbReference type="NCBI Taxonomy" id="3702"/>
    <lineage>
        <taxon>Eukaryota</taxon>
        <taxon>Viridiplantae</taxon>
        <taxon>Streptophyta</taxon>
        <taxon>Embryophyta</taxon>
        <taxon>Tracheophyta</taxon>
        <taxon>Spermatophyta</taxon>
        <taxon>Magnoliopsida</taxon>
        <taxon>eudicotyledons</taxon>
        <taxon>Gunneridae</taxon>
        <taxon>Pentapetalae</taxon>
        <taxon>rosids</taxon>
        <taxon>malvids</taxon>
        <taxon>Brassicales</taxon>
        <taxon>Brassicaceae</taxon>
        <taxon>Camelineae</taxon>
        <taxon>Arabidopsis</taxon>
    </lineage>
</organism>
<dbReference type="EMBL" id="AC005311">
    <property type="protein sequence ID" value="AAM15029.1"/>
    <property type="molecule type" value="Genomic_DNA"/>
</dbReference>
<dbReference type="EMBL" id="CP002685">
    <property type="protein sequence ID" value="AEC08488.1"/>
    <property type="molecule type" value="Genomic_DNA"/>
</dbReference>
<dbReference type="EMBL" id="BT012587">
    <property type="protein sequence ID" value="AAT06406.1"/>
    <property type="molecule type" value="mRNA"/>
</dbReference>
<dbReference type="EMBL" id="BT015094">
    <property type="protein sequence ID" value="AAT71966.1"/>
    <property type="molecule type" value="mRNA"/>
</dbReference>
<dbReference type="RefSeq" id="NP_850157.1">
    <property type="nucleotide sequence ID" value="NM_179826.2"/>
</dbReference>
<dbReference type="SMR" id="Q8S8N0"/>
<dbReference type="STRING" id="3702.Q8S8N0"/>
<dbReference type="GlyCosmos" id="Q8S8N0">
    <property type="glycosylation" value="1 site, No reported glycans"/>
</dbReference>
<dbReference type="PaxDb" id="3702-AT2G31081.1"/>
<dbReference type="EnsemblPlants" id="AT2G31081.1">
    <property type="protein sequence ID" value="AT2G31081.1"/>
    <property type="gene ID" value="AT2G31081"/>
</dbReference>
<dbReference type="GeneID" id="817661"/>
<dbReference type="Gramene" id="AT2G31081.1">
    <property type="protein sequence ID" value="AT2G31081.1"/>
    <property type="gene ID" value="AT2G31081"/>
</dbReference>
<dbReference type="KEGG" id="ath:AT2G31081"/>
<dbReference type="Araport" id="AT2G31081"/>
<dbReference type="TAIR" id="AT2G31081">
    <property type="gene designation" value="CLE4"/>
</dbReference>
<dbReference type="eggNOG" id="ENOG502SYF4">
    <property type="taxonomic scope" value="Eukaryota"/>
</dbReference>
<dbReference type="HOGENOM" id="CLU_194792_0_0_1"/>
<dbReference type="InParanoid" id="Q8S8N0"/>
<dbReference type="OMA" id="MASFKLW"/>
<dbReference type="PhylomeDB" id="Q8S8N0"/>
<dbReference type="PRO" id="PR:Q8S8N0"/>
<dbReference type="Proteomes" id="UP000006548">
    <property type="component" value="Chromosome 2"/>
</dbReference>
<dbReference type="ExpressionAtlas" id="Q8S8N0">
    <property type="expression patterns" value="baseline and differential"/>
</dbReference>
<dbReference type="GO" id="GO:0048046">
    <property type="term" value="C:apoplast"/>
    <property type="evidence" value="ECO:0000255"/>
    <property type="project" value="TAIR"/>
</dbReference>
<dbReference type="GO" id="GO:0045168">
    <property type="term" value="P:cell-cell signaling involved in cell fate commitment"/>
    <property type="evidence" value="ECO:0000250"/>
    <property type="project" value="UniProtKB"/>
</dbReference>
<dbReference type="GO" id="GO:0010075">
    <property type="term" value="P:regulation of meristem growth"/>
    <property type="evidence" value="ECO:0000315"/>
    <property type="project" value="TAIR"/>
</dbReference>
<dbReference type="InterPro" id="IPR039616">
    <property type="entry name" value="CLE1-4"/>
</dbReference>
<dbReference type="PANTHER" id="PTHR33869">
    <property type="entry name" value="CLAVATA3/ESR (CLE)-RELATED PROTEIN 3"/>
    <property type="match status" value="1"/>
</dbReference>
<dbReference type="PANTHER" id="PTHR33869:SF5">
    <property type="entry name" value="CLAVATA3_ESR (CLE)-RELATED PROTEIN 4"/>
    <property type="match status" value="1"/>
</dbReference>
<protein>
    <recommendedName>
        <fullName evidence="6">CLAVATA3/ESR (CLE)-related protein 4</fullName>
    </recommendedName>
    <component>
        <recommendedName>
            <fullName evidence="6">CLE4p</fullName>
        </recommendedName>
    </component>
</protein>
<feature type="signal peptide" evidence="2">
    <location>
        <begin position="1"/>
        <end position="22"/>
    </location>
</feature>
<feature type="chain" id="PRO_0000401239" description="CLAVATA3/ESR (CLE)-related protein 4">
    <location>
        <begin position="23"/>
        <end position="80"/>
    </location>
</feature>
<feature type="peptide" id="PRO_0000401240" description="CLE4p" evidence="1">
    <location>
        <begin position="69"/>
        <end position="80"/>
    </location>
</feature>
<feature type="region of interest" description="Disordered" evidence="3">
    <location>
        <begin position="55"/>
        <end position="80"/>
    </location>
</feature>
<feature type="modified residue" description="Hydroxyproline" evidence="1">
    <location>
        <position position="72"/>
    </location>
</feature>
<feature type="modified residue" description="Hydroxyproline" evidence="1">
    <location>
        <position position="75"/>
    </location>
</feature>
<feature type="glycosylation site" description="O-linked (Ara...) hydroxyproline" evidence="1">
    <location>
        <position position="75"/>
    </location>
</feature>
<sequence length="80" mass="9052">MASFKLWVCLILLLLEFSVHQCRPLVAEESPSDSGNIRKIMRELLKRSEELKVRSKDGQTVLGTLDSKRLSPGGPDPRHH</sequence>
<accession>Q8S8N0</accession>
<gene>
    <name evidence="6" type="primary">CLE4</name>
    <name type="synonym">CLE6</name>
    <name evidence="8" type="ordered locus">At2g31081</name>
    <name evidence="9" type="ORF">T16B12</name>
</gene>
<keyword id="KW-0217">Developmental protein</keyword>
<keyword id="KW-0221">Differentiation</keyword>
<keyword id="KW-0325">Glycoprotein</keyword>
<keyword id="KW-0379">Hydroxylation</keyword>
<keyword id="KW-1185">Reference proteome</keyword>
<keyword id="KW-0964">Secreted</keyword>
<keyword id="KW-0732">Signal</keyword>
<evidence type="ECO:0000250" key="1">
    <source>
        <dbReference type="UniProtKB" id="O49519"/>
    </source>
</evidence>
<evidence type="ECO:0000255" key="2"/>
<evidence type="ECO:0000256" key="3">
    <source>
        <dbReference type="SAM" id="MobiDB-lite"/>
    </source>
</evidence>
<evidence type="ECO:0000269" key="4">
    <source>
    </source>
</evidence>
<evidence type="ECO:0000269" key="5">
    <source>
    </source>
</evidence>
<evidence type="ECO:0000303" key="6">
    <source>
    </source>
</evidence>
<evidence type="ECO:0000305" key="7"/>
<evidence type="ECO:0000312" key="8">
    <source>
        <dbReference type="Araport" id="AT2G31081"/>
    </source>
</evidence>
<evidence type="ECO:0000312" key="9">
    <source>
        <dbReference type="EMBL" id="AAM15029.1"/>
    </source>
</evidence>
<reference key="1">
    <citation type="journal article" date="1999" name="Nature">
        <title>Sequence and analysis of chromosome 2 of the plant Arabidopsis thaliana.</title>
        <authorList>
            <person name="Lin X."/>
            <person name="Kaul S."/>
            <person name="Rounsley S.D."/>
            <person name="Shea T.P."/>
            <person name="Benito M.-I."/>
            <person name="Town C.D."/>
            <person name="Fujii C.Y."/>
            <person name="Mason T.M."/>
            <person name="Bowman C.L."/>
            <person name="Barnstead M.E."/>
            <person name="Feldblyum T.V."/>
            <person name="Buell C.R."/>
            <person name="Ketchum K.A."/>
            <person name="Lee J.J."/>
            <person name="Ronning C.M."/>
            <person name="Koo H.L."/>
            <person name="Moffat K.S."/>
            <person name="Cronin L.A."/>
            <person name="Shen M."/>
            <person name="Pai G."/>
            <person name="Van Aken S."/>
            <person name="Umayam L."/>
            <person name="Tallon L.J."/>
            <person name="Gill J.E."/>
            <person name="Adams M.D."/>
            <person name="Carrera A.J."/>
            <person name="Creasy T.H."/>
            <person name="Goodman H.M."/>
            <person name="Somerville C.R."/>
            <person name="Copenhaver G.P."/>
            <person name="Preuss D."/>
            <person name="Nierman W.C."/>
            <person name="White O."/>
            <person name="Eisen J.A."/>
            <person name="Salzberg S.L."/>
            <person name="Fraser C.M."/>
            <person name="Venter J.C."/>
        </authorList>
    </citation>
    <scope>NUCLEOTIDE SEQUENCE [LARGE SCALE GENOMIC DNA]</scope>
    <source>
        <strain>cv. Columbia</strain>
    </source>
</reference>
<reference key="2">
    <citation type="journal article" date="2017" name="Plant J.">
        <title>Araport11: a complete reannotation of the Arabidopsis thaliana reference genome.</title>
        <authorList>
            <person name="Cheng C.Y."/>
            <person name="Krishnakumar V."/>
            <person name="Chan A.P."/>
            <person name="Thibaud-Nissen F."/>
            <person name="Schobel S."/>
            <person name="Town C.D."/>
        </authorList>
    </citation>
    <scope>GENOME REANNOTATION</scope>
    <source>
        <strain>cv. Columbia</strain>
    </source>
</reference>
<reference key="3">
    <citation type="submission" date="2004-07" db="EMBL/GenBank/DDBJ databases">
        <title>Arabidopsis ORF clones.</title>
        <authorList>
            <person name="Cheuk R.F."/>
            <person name="Chen H."/>
            <person name="Kim C.J."/>
            <person name="Shinn P."/>
            <person name="Ecker J.R."/>
        </authorList>
    </citation>
    <scope>NUCLEOTIDE SEQUENCE [LARGE SCALE MRNA]</scope>
    <source>
        <strain>cv. Columbia</strain>
    </source>
</reference>
<reference key="4">
    <citation type="journal article" date="2001" name="Plant Physiol.">
        <title>A large family of genes that share homology with CLAVATA3.</title>
        <authorList>
            <person name="Cock J.M."/>
            <person name="McCormick S."/>
        </authorList>
    </citation>
    <scope>GENE FAMILY</scope>
    <scope>NOMENCLATURE</scope>
</reference>
<reference key="5">
    <citation type="journal article" date="2003" name="Plant Mol. Biol.">
        <title>The Arabidopsis CLV3-like (CLE) genes are expressed in diverse tissues and encode secreted proteins.</title>
        <authorList>
            <person name="Sharma V.K."/>
            <person name="Ramirez J."/>
            <person name="Fletcher J.C."/>
        </authorList>
    </citation>
    <scope>SUBCELLULAR LOCATION</scope>
    <scope>TISSUE SPECIFICITY</scope>
</reference>
<reference key="6">
    <citation type="journal article" date="2006" name="Plant Physiol.">
        <title>Gain-of-function phenotypes of many CLAVATA3/ESR genes, including four new family members, correlate with tandem variations in the conserved CLAVATA3/ESR domain.</title>
        <authorList>
            <person name="Strabala T.J."/>
            <person name="O'donnell P.J."/>
            <person name="Smit A.-M."/>
            <person name="Ampomah-Dwamena C."/>
            <person name="Martin E.J."/>
            <person name="Netzler N."/>
            <person name="Nieuwenhuizen N.J."/>
            <person name="Quinn B.D."/>
            <person name="Foote H.C.C."/>
            <person name="Hudson K.R."/>
        </authorList>
    </citation>
    <scope>FUNCTION</scope>
    <scope>GENE FAMILY</scope>
</reference>
<reference key="7">
    <citation type="journal article" date="2008" name="Cell. Mol. Life Sci.">
        <title>The CLE family of plant polypeptide signaling molecules.</title>
        <authorList>
            <person name="Jun J.H."/>
            <person name="Fiume E."/>
            <person name="Fletcher J.C."/>
        </authorList>
    </citation>
    <scope>REVIEW</scope>
</reference>
<reference key="8">
    <citation type="journal article" date="2008" name="Curr. Opin. Plant Biol.">
        <title>Diverse and conserved roles of CLE peptides.</title>
        <authorList>
            <person name="Mitchum M.G."/>
            <person name="Wang X."/>
            <person name="Davis E.L."/>
        </authorList>
    </citation>
    <scope>REVIEW</scope>
</reference>
<reference key="9">
    <citation type="journal article" date="2010" name="Protoplasma">
        <title>CLE peptide signaling during plant development.</title>
        <authorList>
            <person name="Wang G."/>
            <person name="Fiers M."/>
        </authorList>
    </citation>
    <scope>REVIEW</scope>
</reference>
<comment type="function">
    <molecule>CLE4p</molecule>
    <text evidence="5">Extracellular signal peptide that regulates cell fate.</text>
</comment>
<comment type="subcellular location">
    <molecule>CLE4p</molecule>
    <subcellularLocation>
        <location evidence="4">Secreted</location>
        <location evidence="4">Extracellular space</location>
    </subcellularLocation>
</comment>
<comment type="tissue specificity">
    <molecule>CLE4p</molecule>
    <text evidence="4">Expressed in roots and seedlings.</text>
</comment>
<comment type="PTM">
    <molecule>CLE4p</molecule>
    <text evidence="1">The O-glycosylation (arabinosylation) of the hydroxyproline Pro-75 enhances binding affinity of the CLE4p peptide for its receptor.</text>
</comment>
<comment type="similarity">
    <text evidence="7">Belongs to the CLV3/ESR signal peptide family.</text>
</comment>
<name>CLE4_ARATH</name>
<proteinExistence type="evidence at transcript level"/>